<gene>
    <name evidence="1" type="primary">rph</name>
    <name type="ordered locus">Syncc9605_0270</name>
</gene>
<evidence type="ECO:0000255" key="1">
    <source>
        <dbReference type="HAMAP-Rule" id="MF_00564"/>
    </source>
</evidence>
<dbReference type="EC" id="2.7.7.56" evidence="1"/>
<dbReference type="EMBL" id="CP000110">
    <property type="protein sequence ID" value="ABB34046.1"/>
    <property type="molecule type" value="Genomic_DNA"/>
</dbReference>
<dbReference type="RefSeq" id="WP_011363298.1">
    <property type="nucleotide sequence ID" value="NC_007516.1"/>
</dbReference>
<dbReference type="SMR" id="Q3AMY6"/>
<dbReference type="STRING" id="110662.Syncc9605_0270"/>
<dbReference type="KEGG" id="syd:Syncc9605_0270"/>
<dbReference type="eggNOG" id="COG0689">
    <property type="taxonomic scope" value="Bacteria"/>
</dbReference>
<dbReference type="HOGENOM" id="CLU_050858_0_0_3"/>
<dbReference type="OrthoDB" id="9802265at2"/>
<dbReference type="GO" id="GO:0000175">
    <property type="term" value="F:3'-5'-RNA exonuclease activity"/>
    <property type="evidence" value="ECO:0007669"/>
    <property type="project" value="UniProtKB-UniRule"/>
</dbReference>
<dbReference type="GO" id="GO:0000049">
    <property type="term" value="F:tRNA binding"/>
    <property type="evidence" value="ECO:0007669"/>
    <property type="project" value="UniProtKB-UniRule"/>
</dbReference>
<dbReference type="GO" id="GO:0009022">
    <property type="term" value="F:tRNA nucleotidyltransferase activity"/>
    <property type="evidence" value="ECO:0007669"/>
    <property type="project" value="UniProtKB-UniRule"/>
</dbReference>
<dbReference type="GO" id="GO:0016075">
    <property type="term" value="P:rRNA catabolic process"/>
    <property type="evidence" value="ECO:0007669"/>
    <property type="project" value="UniProtKB-UniRule"/>
</dbReference>
<dbReference type="GO" id="GO:0006364">
    <property type="term" value="P:rRNA processing"/>
    <property type="evidence" value="ECO:0007669"/>
    <property type="project" value="UniProtKB-KW"/>
</dbReference>
<dbReference type="GO" id="GO:0008033">
    <property type="term" value="P:tRNA processing"/>
    <property type="evidence" value="ECO:0007669"/>
    <property type="project" value="UniProtKB-UniRule"/>
</dbReference>
<dbReference type="FunFam" id="3.30.230.70:FF:000003">
    <property type="entry name" value="Ribonuclease PH"/>
    <property type="match status" value="1"/>
</dbReference>
<dbReference type="Gene3D" id="3.30.230.70">
    <property type="entry name" value="GHMP Kinase, N-terminal domain"/>
    <property type="match status" value="1"/>
</dbReference>
<dbReference type="HAMAP" id="MF_00564">
    <property type="entry name" value="RNase_PH"/>
    <property type="match status" value="1"/>
</dbReference>
<dbReference type="InterPro" id="IPR001247">
    <property type="entry name" value="ExoRNase_PH_dom1"/>
</dbReference>
<dbReference type="InterPro" id="IPR015847">
    <property type="entry name" value="ExoRNase_PH_dom2"/>
</dbReference>
<dbReference type="InterPro" id="IPR036345">
    <property type="entry name" value="ExoRNase_PH_dom2_sf"/>
</dbReference>
<dbReference type="InterPro" id="IPR027408">
    <property type="entry name" value="PNPase/RNase_PH_dom_sf"/>
</dbReference>
<dbReference type="InterPro" id="IPR020568">
    <property type="entry name" value="Ribosomal_Su5_D2-typ_SF"/>
</dbReference>
<dbReference type="InterPro" id="IPR050080">
    <property type="entry name" value="RNase_PH"/>
</dbReference>
<dbReference type="InterPro" id="IPR002381">
    <property type="entry name" value="RNase_PH_bac-type"/>
</dbReference>
<dbReference type="InterPro" id="IPR018336">
    <property type="entry name" value="RNase_PH_CS"/>
</dbReference>
<dbReference type="NCBIfam" id="TIGR01966">
    <property type="entry name" value="RNasePH"/>
    <property type="match status" value="1"/>
</dbReference>
<dbReference type="PANTHER" id="PTHR11953">
    <property type="entry name" value="EXOSOME COMPLEX COMPONENT"/>
    <property type="match status" value="1"/>
</dbReference>
<dbReference type="PANTHER" id="PTHR11953:SF0">
    <property type="entry name" value="EXOSOME COMPLEX COMPONENT RRP41"/>
    <property type="match status" value="1"/>
</dbReference>
<dbReference type="Pfam" id="PF01138">
    <property type="entry name" value="RNase_PH"/>
    <property type="match status" value="1"/>
</dbReference>
<dbReference type="Pfam" id="PF03725">
    <property type="entry name" value="RNase_PH_C"/>
    <property type="match status" value="1"/>
</dbReference>
<dbReference type="SUPFAM" id="SSF55666">
    <property type="entry name" value="Ribonuclease PH domain 2-like"/>
    <property type="match status" value="1"/>
</dbReference>
<dbReference type="SUPFAM" id="SSF54211">
    <property type="entry name" value="Ribosomal protein S5 domain 2-like"/>
    <property type="match status" value="1"/>
</dbReference>
<dbReference type="PROSITE" id="PS01277">
    <property type="entry name" value="RIBONUCLEASE_PH"/>
    <property type="match status" value="1"/>
</dbReference>
<reference key="1">
    <citation type="submission" date="2005-07" db="EMBL/GenBank/DDBJ databases">
        <title>Complete sequence of Synechococcus sp. CC9605.</title>
        <authorList>
            <consortium name="US DOE Joint Genome Institute"/>
            <person name="Copeland A."/>
            <person name="Lucas S."/>
            <person name="Lapidus A."/>
            <person name="Barry K."/>
            <person name="Detter J.C."/>
            <person name="Glavina T."/>
            <person name="Hammon N."/>
            <person name="Israni S."/>
            <person name="Pitluck S."/>
            <person name="Schmutz J."/>
            <person name="Martinez M."/>
            <person name="Larimer F."/>
            <person name="Land M."/>
            <person name="Kyrpides N."/>
            <person name="Ivanova N."/>
            <person name="Richardson P."/>
        </authorList>
    </citation>
    <scope>NUCLEOTIDE SEQUENCE [LARGE SCALE GENOMIC DNA]</scope>
    <source>
        <strain>CC9605</strain>
    </source>
</reference>
<protein>
    <recommendedName>
        <fullName evidence="1">Ribonuclease PH</fullName>
        <shortName evidence="1">RNase PH</shortName>
        <ecNumber evidence="1">2.7.7.56</ecNumber>
    </recommendedName>
    <alternativeName>
        <fullName evidence="1">tRNA nucleotidyltransferase</fullName>
    </alternativeName>
</protein>
<comment type="function">
    <text evidence="1">Phosphorolytic 3'-5' exoribonuclease that plays an important role in tRNA 3'-end maturation. Removes nucleotide residues following the 3'-CCA terminus of tRNAs; can also add nucleotides to the ends of RNA molecules by using nucleoside diphosphates as substrates, but this may not be physiologically important. Probably plays a role in initiation of 16S rRNA degradation (leading to ribosome degradation) during starvation.</text>
</comment>
<comment type="catalytic activity">
    <reaction evidence="1">
        <text>tRNA(n+1) + phosphate = tRNA(n) + a ribonucleoside 5'-diphosphate</text>
        <dbReference type="Rhea" id="RHEA:10628"/>
        <dbReference type="Rhea" id="RHEA-COMP:17343"/>
        <dbReference type="Rhea" id="RHEA-COMP:17344"/>
        <dbReference type="ChEBI" id="CHEBI:43474"/>
        <dbReference type="ChEBI" id="CHEBI:57930"/>
        <dbReference type="ChEBI" id="CHEBI:173114"/>
        <dbReference type="EC" id="2.7.7.56"/>
    </reaction>
</comment>
<comment type="subunit">
    <text evidence="1">Homohexameric ring arranged as a trimer of dimers.</text>
</comment>
<comment type="similarity">
    <text evidence="1">Belongs to the RNase PH family.</text>
</comment>
<name>RNPH_SYNSC</name>
<keyword id="KW-0548">Nucleotidyltransferase</keyword>
<keyword id="KW-0694">RNA-binding</keyword>
<keyword id="KW-0698">rRNA processing</keyword>
<keyword id="KW-0808">Transferase</keyword>
<keyword id="KW-0819">tRNA processing</keyword>
<keyword id="KW-0820">tRNA-binding</keyword>
<proteinExistence type="inferred from homology"/>
<feature type="chain" id="PRO_1000024902" description="Ribonuclease PH">
    <location>
        <begin position="1"/>
        <end position="247"/>
    </location>
</feature>
<feature type="binding site" evidence="1">
    <location>
        <position position="90"/>
    </location>
    <ligand>
        <name>phosphate</name>
        <dbReference type="ChEBI" id="CHEBI:43474"/>
        <note>substrate</note>
    </ligand>
</feature>
<feature type="binding site" evidence="1">
    <location>
        <begin position="128"/>
        <end position="130"/>
    </location>
    <ligand>
        <name>phosphate</name>
        <dbReference type="ChEBI" id="CHEBI:43474"/>
        <note>substrate</note>
    </ligand>
</feature>
<sequence>MSQSPEHRTDGRRPEQLRPFSVTWNPMGFALSSLVVHTGRTAVLCSVCLEGKVPRWRKGEGLGWLSAEYRLLPGSTPQRQSRELMKLSGRTQEIQRLIGRSLRAVIDMERLGERTLLIDCDVIQADAGTRTASITGAWLALDQACRSLVEQGVLEQSPLVDQVAAVSVGLVDGQALLDLDYSEDSRAEVDLNVVQAGDGRLLEIQGTAEGAPFSRSQLNELLDLAEPGLSSLMQAQRQAFTEHSSVT</sequence>
<accession>Q3AMY6</accession>
<organism>
    <name type="scientific">Synechococcus sp. (strain CC9605)</name>
    <dbReference type="NCBI Taxonomy" id="110662"/>
    <lineage>
        <taxon>Bacteria</taxon>
        <taxon>Bacillati</taxon>
        <taxon>Cyanobacteriota</taxon>
        <taxon>Cyanophyceae</taxon>
        <taxon>Synechococcales</taxon>
        <taxon>Synechococcaceae</taxon>
        <taxon>Synechococcus</taxon>
    </lineage>
</organism>